<organism>
    <name type="scientific">Rattus norvegicus</name>
    <name type="common">Rat</name>
    <dbReference type="NCBI Taxonomy" id="10116"/>
    <lineage>
        <taxon>Eukaryota</taxon>
        <taxon>Metazoa</taxon>
        <taxon>Chordata</taxon>
        <taxon>Craniata</taxon>
        <taxon>Vertebrata</taxon>
        <taxon>Euteleostomi</taxon>
        <taxon>Mammalia</taxon>
        <taxon>Eutheria</taxon>
        <taxon>Euarchontoglires</taxon>
        <taxon>Glires</taxon>
        <taxon>Rodentia</taxon>
        <taxon>Myomorpha</taxon>
        <taxon>Muroidea</taxon>
        <taxon>Muridae</taxon>
        <taxon>Murinae</taxon>
        <taxon>Rattus</taxon>
    </lineage>
</organism>
<protein>
    <recommendedName>
        <fullName>GTP-binding protein Rab-3D</fullName>
        <ecNumber evidence="3">3.6.5.2</ecNumber>
    </recommendedName>
</protein>
<reference key="1">
    <citation type="journal article" date="1997" name="J. Immunol.">
        <title>Involvement of the ras-like GTPase rab3d in RBL-2H3 mast cell exocytosis following stimulation via high affinity IgE receptors (Fc epsilonRI).</title>
        <authorList>
            <person name="Roa M."/>
            <person name="Paumet F."/>
            <person name="le Mao J."/>
            <person name="David B."/>
            <person name="Blank U."/>
        </authorList>
    </citation>
    <scope>NUCLEOTIDE SEQUENCE [MRNA]</scope>
</reference>
<reference key="2">
    <citation type="journal article" date="2004" name="Genome Res.">
        <title>The status, quality, and expansion of the NIH full-length cDNA project: the Mammalian Gene Collection (MGC).</title>
        <authorList>
            <consortium name="The MGC Project Team"/>
        </authorList>
    </citation>
    <scope>NUCLEOTIDE SEQUENCE [LARGE SCALE MRNA]</scope>
    <source>
        <tissue>Kidney</tissue>
    </source>
</reference>
<reference key="3">
    <citation type="journal article" date="1994" name="FEBS Lett.">
        <title>RT-PCR cloning of Rab3 isoforms expressed in peritoneal mast cells.</title>
        <authorList>
            <person name="Oberhauser A.F."/>
            <person name="Balan V."/>
            <person name="Fernandez-Badilla C.L."/>
            <person name="Fernandez J.M."/>
        </authorList>
    </citation>
    <scope>NUCLEOTIDE SEQUENCE [MRNA] OF 16-82</scope>
    <source>
        <tissue>Mast cell</tissue>
    </source>
</reference>
<reference key="4">
    <citation type="journal article" date="1992" name="J. Biol. Chem.">
        <title>Rab15, a novel low molecular weight GTP-binding protein specifically expressed in rat brain.</title>
        <authorList>
            <person name="Elferink L.A."/>
            <person name="Anzai K."/>
            <person name="Scheller R.H."/>
        </authorList>
    </citation>
    <scope>NUCLEOTIDE SEQUENCE [MRNA] OF 22-219</scope>
    <scope>TISSUE SPECIFICITY</scope>
    <source>
        <strain>Sprague-Dawley</strain>
        <tissue>Brain</tissue>
    </source>
</reference>
<reference key="5">
    <citation type="journal article" date="1995" name="Mol. Cell. Biol.">
        <title>Interaction cloning of Rabin3, a novel protein that associates with the Ras-like GTPase Rab3A.</title>
        <authorList>
            <person name="Brondyk W.H."/>
            <person name="McKiernan C.J."/>
            <person name="Fortner K.A."/>
            <person name="Stabila P."/>
            <person name="Holz R.W."/>
            <person name="Macara I.G."/>
        </authorList>
    </citation>
    <scope>INTERACTION WITH RAB3IP</scope>
</reference>
<reference key="6">
    <citation type="journal article" date="1998" name="Eur. J. Cell Biol.">
        <title>Carboxyl methylation of rab3D is developmentally regulated in the rat pancreas: correlation with exocrine function.</title>
        <authorList>
            <person name="Valentijn J.A."/>
            <person name="Jamieson J.D."/>
        </authorList>
    </citation>
    <scope>METHYLATION AT CYS-219</scope>
    <source>
        <tissue>Pancreas</tissue>
    </source>
</reference>
<evidence type="ECO:0000250" key="1"/>
<evidence type="ECO:0000250" key="2">
    <source>
        <dbReference type="UniProtKB" id="O95716"/>
    </source>
</evidence>
<evidence type="ECO:0000250" key="3">
    <source>
        <dbReference type="UniProtKB" id="P20336"/>
    </source>
</evidence>
<evidence type="ECO:0000250" key="4">
    <source>
        <dbReference type="UniProtKB" id="P20337"/>
    </source>
</evidence>
<evidence type="ECO:0000250" key="5">
    <source>
        <dbReference type="UniProtKB" id="P35276"/>
    </source>
</evidence>
<evidence type="ECO:0000250" key="6">
    <source>
        <dbReference type="UniProtKB" id="P63012"/>
    </source>
</evidence>
<evidence type="ECO:0000256" key="7">
    <source>
        <dbReference type="SAM" id="MobiDB-lite"/>
    </source>
</evidence>
<evidence type="ECO:0000269" key="8">
    <source>
    </source>
</evidence>
<evidence type="ECO:0000269" key="9">
    <source>
    </source>
</evidence>
<evidence type="ECO:0000269" key="10">
    <source>
    </source>
</evidence>
<evidence type="ECO:0000305" key="11"/>
<evidence type="ECO:0000312" key="12">
    <source>
        <dbReference type="RGD" id="620924"/>
    </source>
</evidence>
<name>RAB3D_RAT</name>
<comment type="function">
    <text evidence="3 5">The small GTPases Rab are key regulators of intracellular membrane trafficking, from the formation of transport vesicles to their fusion with membranes. Rabs cycle between an inactive GDP-bound form and an active GTP-bound form that is able to recruit to membranes different sets of downstream effectors directly responsible for vesicle formation, movement, tethering and fusion (By similarity). RAB3D may be involved in the insulin-induced exocytosis of GLUT4-containing vesicles in adipocytes (By similarity).</text>
</comment>
<comment type="catalytic activity">
    <reaction evidence="3">
        <text>GTP + H2O = GDP + phosphate + H(+)</text>
        <dbReference type="Rhea" id="RHEA:19669"/>
        <dbReference type="ChEBI" id="CHEBI:15377"/>
        <dbReference type="ChEBI" id="CHEBI:15378"/>
        <dbReference type="ChEBI" id="CHEBI:37565"/>
        <dbReference type="ChEBI" id="CHEBI:43474"/>
        <dbReference type="ChEBI" id="CHEBI:58189"/>
        <dbReference type="EC" id="3.6.5.2"/>
    </reaction>
    <physiologicalReaction direction="left-to-right" evidence="3">
        <dbReference type="Rhea" id="RHEA:19670"/>
    </physiologicalReaction>
</comment>
<comment type="cofactor">
    <cofactor evidence="2">
        <name>Mg(2+)</name>
        <dbReference type="ChEBI" id="CHEBI:18420"/>
    </cofactor>
</comment>
<comment type="activity regulation">
    <text evidence="3">Regulated by guanine nucleotide exchange factors (GEFs) which promote the exchange of bound GDP for free GTP. Regulated by GTPase activating proteins (GAPs) which increase the GTP hydrolysis activity. Inhibited by GDP dissociation inhibitors (GDIs) which prevent Rab-GDP dissociation.</text>
</comment>
<comment type="subunit">
    <text evidence="2 5 9">Interacts with RIMS1, RIMS2, RPH3A and RPH3AL (By similarity). Interacts with RAB3IP (PubMed:7532276). The GTP-bound form interacts with REP15 (By similarity). Interacts with CHM; phosphorylation at Thr-86 disrupts this interaction (By similarity). Interacts with MADD (via uDENN domain); the GTP-bound form is preferred for interaction (By similarity).</text>
</comment>
<comment type="subcellular location">
    <subcellularLocation>
        <location evidence="11">Cell membrane</location>
        <topology evidence="11">Lipid-anchor</topology>
        <orientation evidence="11">Cytoplasmic side</orientation>
    </subcellularLocation>
</comment>
<comment type="tissue specificity">
    <text evidence="8">Highest levels found in lung.</text>
</comment>
<comment type="domain">
    <text evidence="6">Switch 1, switch 2 and the interswitch regions are characteristic of Rab GTPases and mediate the interactions with Rab downstream effectors. The switch regions undergo conformational changes upon nucleotide binding which drives interaction with specific sets of effector proteins, with most effectors only binding to GTP-bound Rab.</text>
</comment>
<comment type="PTM">
    <text evidence="10">In fetal glands the majority of the proteins are methylated, whereas in neonatal and adult glands, only 50% are methylated.</text>
</comment>
<comment type="PTM">
    <text evidence="2">Phosphorylation of Thr-86 in the switch II region by LRRK2 prevents the association of RAB regulatory proteins, including CHM.</text>
</comment>
<comment type="similarity">
    <text evidence="11">Belongs to the small GTPase superfamily. Rab family.</text>
</comment>
<accession>Q63942</accession>
<accession>P35291</accession>
<feature type="initiator methionine" description="Removed" evidence="2">
    <location>
        <position position="1"/>
    </location>
</feature>
<feature type="chain" id="PRO_0000121090" description="GTP-binding protein Rab-3D">
    <location>
        <begin position="2"/>
        <end position="219"/>
    </location>
</feature>
<feature type="region of interest" description="Disordered" evidence="7">
    <location>
        <begin position="190"/>
        <end position="219"/>
    </location>
</feature>
<feature type="short sequence motif" description="Switch 1" evidence="6">
    <location>
        <begin position="49"/>
        <end position="58"/>
    </location>
</feature>
<feature type="short sequence motif" description="Switch 2" evidence="6">
    <location>
        <begin position="80"/>
        <end position="96"/>
    </location>
</feature>
<feature type="compositionally biased region" description="Low complexity" evidence="7">
    <location>
        <begin position="193"/>
        <end position="203"/>
    </location>
</feature>
<feature type="compositionally biased region" description="Pro residues" evidence="7">
    <location>
        <begin position="209"/>
        <end position="219"/>
    </location>
</feature>
<feature type="binding site" evidence="2">
    <location>
        <begin position="29"/>
        <end position="37"/>
    </location>
    <ligand>
        <name>GDP</name>
        <dbReference type="ChEBI" id="CHEBI:58189"/>
    </ligand>
</feature>
<feature type="binding site" evidence="4">
    <location>
        <position position="31"/>
    </location>
    <ligand>
        <name>GTP</name>
        <dbReference type="ChEBI" id="CHEBI:37565"/>
    </ligand>
</feature>
<feature type="binding site" evidence="4">
    <location>
        <position position="32"/>
    </location>
    <ligand>
        <name>GTP</name>
        <dbReference type="ChEBI" id="CHEBI:37565"/>
    </ligand>
</feature>
<feature type="binding site" evidence="4">
    <location>
        <position position="33"/>
    </location>
    <ligand>
        <name>GTP</name>
        <dbReference type="ChEBI" id="CHEBI:37565"/>
    </ligand>
</feature>
<feature type="binding site" evidence="4">
    <location>
        <position position="34"/>
    </location>
    <ligand>
        <name>GTP</name>
        <dbReference type="ChEBI" id="CHEBI:37565"/>
    </ligand>
</feature>
<feature type="binding site" evidence="4">
    <location>
        <position position="35"/>
    </location>
    <ligand>
        <name>GTP</name>
        <dbReference type="ChEBI" id="CHEBI:37565"/>
    </ligand>
</feature>
<feature type="binding site" evidence="4">
    <location>
        <position position="36"/>
    </location>
    <ligand>
        <name>GTP</name>
        <dbReference type="ChEBI" id="CHEBI:37565"/>
    </ligand>
</feature>
<feature type="binding site" evidence="2">
    <location>
        <position position="36"/>
    </location>
    <ligand>
        <name>Mg(2+)</name>
        <dbReference type="ChEBI" id="CHEBI:18420"/>
    </ligand>
</feature>
<feature type="binding site" evidence="4">
    <location>
        <position position="37"/>
    </location>
    <ligand>
        <name>GTP</name>
        <dbReference type="ChEBI" id="CHEBI:37565"/>
    </ligand>
</feature>
<feature type="binding site" evidence="4">
    <location>
        <position position="49"/>
    </location>
    <ligand>
        <name>GTP</name>
        <dbReference type="ChEBI" id="CHEBI:37565"/>
    </ligand>
</feature>
<feature type="binding site" evidence="4">
    <location>
        <position position="53"/>
    </location>
    <ligand>
        <name>GTP</name>
        <dbReference type="ChEBI" id="CHEBI:37565"/>
    </ligand>
</feature>
<feature type="binding site" evidence="4">
    <location>
        <position position="54"/>
    </location>
    <ligand>
        <name>Mg(2+)</name>
        <dbReference type="ChEBI" id="CHEBI:18420"/>
    </ligand>
</feature>
<feature type="binding site" evidence="4">
    <location>
        <position position="77"/>
    </location>
    <ligand>
        <name>Mg(2+)</name>
        <dbReference type="ChEBI" id="CHEBI:18420"/>
    </ligand>
</feature>
<feature type="binding site" evidence="4">
    <location>
        <position position="80"/>
    </location>
    <ligand>
        <name>GTP</name>
        <dbReference type="ChEBI" id="CHEBI:37565"/>
    </ligand>
</feature>
<feature type="binding site" evidence="2">
    <location>
        <begin position="135"/>
        <end position="138"/>
    </location>
    <ligand>
        <name>GDP</name>
        <dbReference type="ChEBI" id="CHEBI:58189"/>
    </ligand>
</feature>
<feature type="binding site" evidence="4">
    <location>
        <position position="135"/>
    </location>
    <ligand>
        <name>GTP</name>
        <dbReference type="ChEBI" id="CHEBI:37565"/>
    </ligand>
</feature>
<feature type="binding site" evidence="4">
    <location>
        <position position="136"/>
    </location>
    <ligand>
        <name>GTP</name>
        <dbReference type="ChEBI" id="CHEBI:37565"/>
    </ligand>
</feature>
<feature type="binding site" evidence="4">
    <location>
        <position position="138"/>
    </location>
    <ligand>
        <name>GTP</name>
        <dbReference type="ChEBI" id="CHEBI:37565"/>
    </ligand>
</feature>
<feature type="binding site" evidence="2">
    <location>
        <begin position="165"/>
        <end position="167"/>
    </location>
    <ligand>
        <name>GDP</name>
        <dbReference type="ChEBI" id="CHEBI:58189"/>
    </ligand>
</feature>
<feature type="binding site" evidence="4">
    <location>
        <position position="166"/>
    </location>
    <ligand>
        <name>GTP</name>
        <dbReference type="ChEBI" id="CHEBI:37565"/>
    </ligand>
</feature>
<feature type="binding site" evidence="4">
    <location>
        <position position="167"/>
    </location>
    <ligand>
        <name>GTP</name>
        <dbReference type="ChEBI" id="CHEBI:37565"/>
    </ligand>
</feature>
<feature type="modified residue" description="N-acetylalanine" evidence="2">
    <location>
        <position position="2"/>
    </location>
</feature>
<feature type="modified residue" description="Phosphothreonine" evidence="2">
    <location>
        <position position="86"/>
    </location>
</feature>
<feature type="modified residue" description="Phosphoserine" evidence="4">
    <location>
        <position position="190"/>
    </location>
</feature>
<feature type="modified residue" description="Cysteine methyl ester; partial" evidence="10">
    <location>
        <position position="219"/>
    </location>
</feature>
<feature type="lipid moiety-binding region" description="S-geranylgeranyl cysteine" evidence="1">
    <location>
        <position position="217"/>
    </location>
</feature>
<feature type="lipid moiety-binding region" description="S-geranylgeranyl cysteine" evidence="1">
    <location>
        <position position="219"/>
    </location>
</feature>
<feature type="sequence conflict" description="In Ref. 4; AAA41996." evidence="11" ref="4">
    <original>A</original>
    <variation>S</variation>
    <location>
        <position position="205"/>
    </location>
</feature>
<keyword id="KW-0007">Acetylation</keyword>
<keyword id="KW-1003">Cell membrane</keyword>
<keyword id="KW-0268">Exocytosis</keyword>
<keyword id="KW-0342">GTP-binding</keyword>
<keyword id="KW-0378">Hydrolase</keyword>
<keyword id="KW-0449">Lipoprotein</keyword>
<keyword id="KW-0460">Magnesium</keyword>
<keyword id="KW-0472">Membrane</keyword>
<keyword id="KW-0479">Metal-binding</keyword>
<keyword id="KW-0488">Methylation</keyword>
<keyword id="KW-0547">Nucleotide-binding</keyword>
<keyword id="KW-0597">Phosphoprotein</keyword>
<keyword id="KW-0636">Prenylation</keyword>
<keyword id="KW-0653">Protein transport</keyword>
<keyword id="KW-1185">Reference proteome</keyword>
<keyword id="KW-0813">Transport</keyword>
<gene>
    <name evidence="12" type="primary">Rab3d</name>
    <name type="synonym">Rab16</name>
</gene>
<sequence>MASASEPPASPRDAADQNFDYMFKLLLIGNSSVGKTSFLFRYADDSFTPAFVSTVGIDFKVKTVYRHDKRIKLQIWDTAGQERYRTITTAYYRGAMGFLLMYDIANQESFTAVQDWATQIKTYSWDNAQVILVGNKCDLEDERVVSAEDGQRLAGDLGFEFFEASAKENINVKQVFERLVDIICDKMNESLEPSSSPGSNGKGPALGDTPPPQPSSCGC</sequence>
<dbReference type="EC" id="3.6.5.2" evidence="3"/>
<dbReference type="EMBL" id="U90206">
    <property type="protein sequence ID" value="AAB81202.1"/>
    <property type="molecule type" value="mRNA"/>
</dbReference>
<dbReference type="EMBL" id="BC081741">
    <property type="protein sequence ID" value="AAH81741.1"/>
    <property type="molecule type" value="mRNA"/>
</dbReference>
<dbReference type="EMBL" id="S68808">
    <property type="protein sequence ID" value="AAB29895.1"/>
    <property type="molecule type" value="mRNA"/>
</dbReference>
<dbReference type="EMBL" id="M83681">
    <property type="protein sequence ID" value="AAA41996.1"/>
    <property type="molecule type" value="mRNA"/>
</dbReference>
<dbReference type="PIR" id="I67631">
    <property type="entry name" value="I67631"/>
</dbReference>
<dbReference type="RefSeq" id="NP_542147.1">
    <property type="nucleotide sequence ID" value="NM_080580.2"/>
</dbReference>
<dbReference type="RefSeq" id="XP_006242656.1">
    <property type="nucleotide sequence ID" value="XM_006242594.5"/>
</dbReference>
<dbReference type="RefSeq" id="XP_017450911.1">
    <property type="nucleotide sequence ID" value="XM_017595422.3"/>
</dbReference>
<dbReference type="SMR" id="Q63942"/>
<dbReference type="BioGRID" id="250825">
    <property type="interactions" value="4"/>
</dbReference>
<dbReference type="FunCoup" id="Q63942">
    <property type="interactions" value="625"/>
</dbReference>
<dbReference type="IntAct" id="Q63942">
    <property type="interactions" value="4"/>
</dbReference>
<dbReference type="MINT" id="Q63942"/>
<dbReference type="STRING" id="10116.ENSRNOP00000015609"/>
<dbReference type="iPTMnet" id="Q63942"/>
<dbReference type="PhosphoSitePlus" id="Q63942"/>
<dbReference type="jPOST" id="Q63942"/>
<dbReference type="PaxDb" id="10116-ENSRNOP00000015609"/>
<dbReference type="Ensembl" id="ENSRNOT00000015609.6">
    <property type="protein sequence ID" value="ENSRNOP00000015609.3"/>
    <property type="gene ID" value="ENSRNOG00000011582.6"/>
</dbReference>
<dbReference type="GeneID" id="140665"/>
<dbReference type="KEGG" id="rno:140665"/>
<dbReference type="UCSC" id="RGD:620924">
    <property type="organism name" value="rat"/>
</dbReference>
<dbReference type="AGR" id="RGD:620924"/>
<dbReference type="CTD" id="9545"/>
<dbReference type="RGD" id="620924">
    <property type="gene designation" value="Rab3d"/>
</dbReference>
<dbReference type="eggNOG" id="KOG0093">
    <property type="taxonomic scope" value="Eukaryota"/>
</dbReference>
<dbReference type="GeneTree" id="ENSGT00940000157552"/>
<dbReference type="HOGENOM" id="CLU_041217_10_1_1"/>
<dbReference type="InParanoid" id="Q63942"/>
<dbReference type="OMA" id="MEGDINL"/>
<dbReference type="PhylomeDB" id="Q63942"/>
<dbReference type="TreeFam" id="TF313199"/>
<dbReference type="Reactome" id="R-RNO-6798695">
    <property type="pathway name" value="Neutrophil degranulation"/>
</dbReference>
<dbReference type="Reactome" id="R-RNO-8873719">
    <property type="pathway name" value="RAB geranylgeranylation"/>
</dbReference>
<dbReference type="PRO" id="PR:Q63942"/>
<dbReference type="Proteomes" id="UP000002494">
    <property type="component" value="Chromosome 8"/>
</dbReference>
<dbReference type="Bgee" id="ENSRNOG00000011582">
    <property type="expression patterns" value="Expressed in pancreas and 20 other cell types or tissues"/>
</dbReference>
<dbReference type="GO" id="GO:0005881">
    <property type="term" value="C:cytoplasmic microtubule"/>
    <property type="evidence" value="ECO:0000266"/>
    <property type="project" value="RGD"/>
</dbReference>
<dbReference type="GO" id="GO:0005768">
    <property type="term" value="C:endosome"/>
    <property type="evidence" value="ECO:0000318"/>
    <property type="project" value="GO_Central"/>
</dbReference>
<dbReference type="GO" id="GO:0005886">
    <property type="term" value="C:plasma membrane"/>
    <property type="evidence" value="ECO:0000318"/>
    <property type="project" value="GO_Central"/>
</dbReference>
<dbReference type="GO" id="GO:0099503">
    <property type="term" value="C:secretory vesicle"/>
    <property type="evidence" value="ECO:0000266"/>
    <property type="project" value="RGD"/>
</dbReference>
<dbReference type="GO" id="GO:0008021">
    <property type="term" value="C:synaptic vesicle"/>
    <property type="evidence" value="ECO:0000318"/>
    <property type="project" value="GO_Central"/>
</dbReference>
<dbReference type="GO" id="GO:0042588">
    <property type="term" value="C:zymogen granule"/>
    <property type="evidence" value="ECO:0000266"/>
    <property type="project" value="RGD"/>
</dbReference>
<dbReference type="GO" id="GO:0005525">
    <property type="term" value="F:GTP binding"/>
    <property type="evidence" value="ECO:0007669"/>
    <property type="project" value="UniProtKB-KW"/>
</dbReference>
<dbReference type="GO" id="GO:0030742">
    <property type="term" value="F:GTP-dependent protein binding"/>
    <property type="evidence" value="ECO:0000266"/>
    <property type="project" value="RGD"/>
</dbReference>
<dbReference type="GO" id="GO:0003924">
    <property type="term" value="F:GTPase activity"/>
    <property type="evidence" value="ECO:0000318"/>
    <property type="project" value="GO_Central"/>
</dbReference>
<dbReference type="GO" id="GO:0031489">
    <property type="term" value="F:myosin V binding"/>
    <property type="evidence" value="ECO:0000266"/>
    <property type="project" value="RGD"/>
</dbReference>
<dbReference type="GO" id="GO:0045453">
    <property type="term" value="P:bone resorption"/>
    <property type="evidence" value="ECO:0000266"/>
    <property type="project" value="RGD"/>
</dbReference>
<dbReference type="GO" id="GO:0006887">
    <property type="term" value="P:exocytosis"/>
    <property type="evidence" value="ECO:0000318"/>
    <property type="project" value="GO_Central"/>
</dbReference>
<dbReference type="GO" id="GO:1903307">
    <property type="term" value="P:positive regulation of regulated secretory pathway"/>
    <property type="evidence" value="ECO:0000266"/>
    <property type="project" value="RGD"/>
</dbReference>
<dbReference type="GO" id="GO:0015031">
    <property type="term" value="P:protein transport"/>
    <property type="evidence" value="ECO:0007669"/>
    <property type="project" value="UniProtKB-KW"/>
</dbReference>
<dbReference type="GO" id="GO:0017157">
    <property type="term" value="P:regulation of exocytosis"/>
    <property type="evidence" value="ECO:0000266"/>
    <property type="project" value="RGD"/>
</dbReference>
<dbReference type="CDD" id="cd01865">
    <property type="entry name" value="Rab3"/>
    <property type="match status" value="1"/>
</dbReference>
<dbReference type="FunFam" id="3.40.50.300:FF:000448">
    <property type="entry name" value="RAB3D, member RAS oncogene family"/>
    <property type="match status" value="1"/>
</dbReference>
<dbReference type="Gene3D" id="3.40.50.300">
    <property type="entry name" value="P-loop containing nucleotide triphosphate hydrolases"/>
    <property type="match status" value="1"/>
</dbReference>
<dbReference type="InterPro" id="IPR027417">
    <property type="entry name" value="P-loop_NTPase"/>
</dbReference>
<dbReference type="InterPro" id="IPR037872">
    <property type="entry name" value="Rab3"/>
</dbReference>
<dbReference type="InterPro" id="IPR005225">
    <property type="entry name" value="Small_GTP-bd"/>
</dbReference>
<dbReference type="InterPro" id="IPR001806">
    <property type="entry name" value="Small_GTPase"/>
</dbReference>
<dbReference type="InterPro" id="IPR050305">
    <property type="entry name" value="Small_GTPase_Rab"/>
</dbReference>
<dbReference type="NCBIfam" id="TIGR00231">
    <property type="entry name" value="small_GTP"/>
    <property type="match status" value="1"/>
</dbReference>
<dbReference type="PANTHER" id="PTHR47980">
    <property type="entry name" value="LD44762P"/>
    <property type="match status" value="1"/>
</dbReference>
<dbReference type="Pfam" id="PF00071">
    <property type="entry name" value="Ras"/>
    <property type="match status" value="1"/>
</dbReference>
<dbReference type="PRINTS" id="PR00449">
    <property type="entry name" value="RASTRNSFRMNG"/>
</dbReference>
<dbReference type="SMART" id="SM00175">
    <property type="entry name" value="RAB"/>
    <property type="match status" value="1"/>
</dbReference>
<dbReference type="SMART" id="SM00176">
    <property type="entry name" value="RAN"/>
    <property type="match status" value="1"/>
</dbReference>
<dbReference type="SMART" id="SM00173">
    <property type="entry name" value="RAS"/>
    <property type="match status" value="1"/>
</dbReference>
<dbReference type="SMART" id="SM00174">
    <property type="entry name" value="RHO"/>
    <property type="match status" value="1"/>
</dbReference>
<dbReference type="SUPFAM" id="SSF52540">
    <property type="entry name" value="P-loop containing nucleoside triphosphate hydrolases"/>
    <property type="match status" value="1"/>
</dbReference>
<dbReference type="PROSITE" id="PS51419">
    <property type="entry name" value="RAB"/>
    <property type="match status" value="1"/>
</dbReference>
<proteinExistence type="evidence at protein level"/>